<gene>
    <name type="primary">Hand2</name>
    <name type="synonym">Dhand</name>
</gene>
<name>HAND2_RAT</name>
<reference key="1">
    <citation type="submission" date="1999-01" db="EMBL/GenBank/DDBJ databases">
        <title>Expression of helix-loop-helix proteins in vascular smooth muscle.</title>
        <authorList>
            <person name="Kemp P."/>
            <person name="Grainger D."/>
            <person name="Metcalfe J."/>
        </authorList>
    </citation>
    <scope>NUCLEOTIDE SEQUENCE [MRNA]</scope>
    <source>
        <strain>Wistar</strain>
        <tissue>Aorta</tissue>
    </source>
</reference>
<dbReference type="EMBL" id="Y08138">
    <property type="protein sequence ID" value="CAA69332.1"/>
    <property type="molecule type" value="mRNA"/>
</dbReference>
<dbReference type="RefSeq" id="NP_073187.1">
    <property type="nucleotide sequence ID" value="NM_022696.2"/>
</dbReference>
<dbReference type="SMR" id="P61295"/>
<dbReference type="FunCoup" id="P61295">
    <property type="interactions" value="113"/>
</dbReference>
<dbReference type="STRING" id="10116.ENSRNOP00000074299"/>
<dbReference type="PhosphoSitePlus" id="P61295"/>
<dbReference type="PaxDb" id="10116-ENSRNOP00000033513"/>
<dbReference type="Ensembl" id="ENSRNOT00000079552.2">
    <property type="protein sequence ID" value="ENSRNOP00000074299.2"/>
    <property type="gene ID" value="ENSRNOG00000060448.2"/>
</dbReference>
<dbReference type="GeneID" id="64637"/>
<dbReference type="KEGG" id="rno:64637"/>
<dbReference type="AGR" id="RGD:621207"/>
<dbReference type="CTD" id="9464"/>
<dbReference type="RGD" id="621207">
    <property type="gene designation" value="Hand2"/>
</dbReference>
<dbReference type="eggNOG" id="KOG4029">
    <property type="taxonomic scope" value="Eukaryota"/>
</dbReference>
<dbReference type="GeneTree" id="ENSGT00940000160772"/>
<dbReference type="InParanoid" id="P61295"/>
<dbReference type="OMA" id="PDYGMAL"/>
<dbReference type="OrthoDB" id="10055449at2759"/>
<dbReference type="PhylomeDB" id="P61295"/>
<dbReference type="PRO" id="PR:P61295"/>
<dbReference type="Proteomes" id="UP000002494">
    <property type="component" value="Chromosome 16"/>
</dbReference>
<dbReference type="GO" id="GO:0000785">
    <property type="term" value="C:chromatin"/>
    <property type="evidence" value="ECO:0000266"/>
    <property type="project" value="RGD"/>
</dbReference>
<dbReference type="GO" id="GO:0005634">
    <property type="term" value="C:nucleus"/>
    <property type="evidence" value="ECO:0000266"/>
    <property type="project" value="RGD"/>
</dbReference>
<dbReference type="GO" id="GO:0032991">
    <property type="term" value="C:protein-containing complex"/>
    <property type="evidence" value="ECO:0000266"/>
    <property type="project" value="RGD"/>
</dbReference>
<dbReference type="GO" id="GO:0005667">
    <property type="term" value="C:transcription regulator complex"/>
    <property type="evidence" value="ECO:0000266"/>
    <property type="project" value="RGD"/>
</dbReference>
<dbReference type="GO" id="GO:0001228">
    <property type="term" value="F:DNA-binding transcription activator activity, RNA polymerase II-specific"/>
    <property type="evidence" value="ECO:0000266"/>
    <property type="project" value="RGD"/>
</dbReference>
<dbReference type="GO" id="GO:0000981">
    <property type="term" value="F:DNA-binding transcription factor activity, RNA polymerase II-specific"/>
    <property type="evidence" value="ECO:0000315"/>
    <property type="project" value="BHF-UCL"/>
</dbReference>
<dbReference type="GO" id="GO:0070888">
    <property type="term" value="F:E-box binding"/>
    <property type="evidence" value="ECO:0000266"/>
    <property type="project" value="RGD"/>
</dbReference>
<dbReference type="GO" id="GO:0003680">
    <property type="term" value="F:minor groove of adenine-thymine-rich DNA binding"/>
    <property type="evidence" value="ECO:0000266"/>
    <property type="project" value="RGD"/>
</dbReference>
<dbReference type="GO" id="GO:0042803">
    <property type="term" value="F:protein homodimerization activity"/>
    <property type="evidence" value="ECO:0000266"/>
    <property type="project" value="RGD"/>
</dbReference>
<dbReference type="GO" id="GO:0000977">
    <property type="term" value="F:RNA polymerase II transcription regulatory region sequence-specific DNA binding"/>
    <property type="evidence" value="ECO:0000266"/>
    <property type="project" value="RGD"/>
</dbReference>
<dbReference type="GO" id="GO:0061629">
    <property type="term" value="F:RNA polymerase II-specific DNA-binding transcription factor binding"/>
    <property type="evidence" value="ECO:0000353"/>
    <property type="project" value="BHF-UCL"/>
</dbReference>
<dbReference type="GO" id="GO:0043565">
    <property type="term" value="F:sequence-specific DNA binding"/>
    <property type="evidence" value="ECO:0000266"/>
    <property type="project" value="RGD"/>
</dbReference>
<dbReference type="GO" id="GO:1990837">
    <property type="term" value="F:sequence-specific double-stranded DNA binding"/>
    <property type="evidence" value="ECO:0000266"/>
    <property type="project" value="RGD"/>
</dbReference>
<dbReference type="GO" id="GO:0001223">
    <property type="term" value="F:transcription coactivator binding"/>
    <property type="evidence" value="ECO:0000353"/>
    <property type="project" value="BHF-UCL"/>
</dbReference>
<dbReference type="GO" id="GO:0007512">
    <property type="term" value="P:adult heart development"/>
    <property type="evidence" value="ECO:0000266"/>
    <property type="project" value="RGD"/>
</dbReference>
<dbReference type="GO" id="GO:0001525">
    <property type="term" value="P:angiogenesis"/>
    <property type="evidence" value="ECO:0007669"/>
    <property type="project" value="UniProtKB-KW"/>
</dbReference>
<dbReference type="GO" id="GO:0006915">
    <property type="term" value="P:apoptotic process"/>
    <property type="evidence" value="ECO:0000266"/>
    <property type="project" value="RGD"/>
</dbReference>
<dbReference type="GO" id="GO:0003278">
    <property type="term" value="P:apoptotic process involved in heart morphogenesis"/>
    <property type="evidence" value="ECO:0000266"/>
    <property type="project" value="RGD"/>
</dbReference>
<dbReference type="GO" id="GO:0061309">
    <property type="term" value="P:cardiac neural crest cell development involved in outflow tract morphogenesis"/>
    <property type="evidence" value="ECO:0000266"/>
    <property type="project" value="RGD"/>
</dbReference>
<dbReference type="GO" id="GO:0003253">
    <property type="term" value="P:cardiac neural crest cell migration involved in outflow tract morphogenesis"/>
    <property type="evidence" value="ECO:0000266"/>
    <property type="project" value="RGD"/>
</dbReference>
<dbReference type="GO" id="GO:0003219">
    <property type="term" value="P:cardiac right ventricle formation"/>
    <property type="evidence" value="ECO:0000266"/>
    <property type="project" value="RGD"/>
</dbReference>
<dbReference type="GO" id="GO:0060536">
    <property type="term" value="P:cartilage morphogenesis"/>
    <property type="evidence" value="ECO:0000266"/>
    <property type="project" value="RGD"/>
</dbReference>
<dbReference type="GO" id="GO:0061325">
    <property type="term" value="P:cell proliferation involved in outflow tract morphogenesis"/>
    <property type="evidence" value="ECO:0000266"/>
    <property type="project" value="RGD"/>
</dbReference>
<dbReference type="GO" id="GO:0071300">
    <property type="term" value="P:cellular response to retinoic acid"/>
    <property type="evidence" value="ECO:0000270"/>
    <property type="project" value="RGD"/>
</dbReference>
<dbReference type="GO" id="GO:0060982">
    <property type="term" value="P:coronary artery morphogenesis"/>
    <property type="evidence" value="ECO:0000266"/>
    <property type="project" value="RGD"/>
</dbReference>
<dbReference type="GO" id="GO:0061371">
    <property type="term" value="P:determination of heart left/right asymmetry"/>
    <property type="evidence" value="ECO:0000266"/>
    <property type="project" value="RGD"/>
</dbReference>
<dbReference type="GO" id="GO:0042733">
    <property type="term" value="P:embryonic digit morphogenesis"/>
    <property type="evidence" value="ECO:0000266"/>
    <property type="project" value="RGD"/>
</dbReference>
<dbReference type="GO" id="GO:0048706">
    <property type="term" value="P:embryonic skeletal system development"/>
    <property type="evidence" value="ECO:0000266"/>
    <property type="project" value="RGD"/>
</dbReference>
<dbReference type="GO" id="GO:1904019">
    <property type="term" value="P:epithelial cell apoptotic process"/>
    <property type="evidence" value="ECO:0000266"/>
    <property type="project" value="RGD"/>
</dbReference>
<dbReference type="GO" id="GO:0007507">
    <property type="term" value="P:heart development"/>
    <property type="evidence" value="ECO:0000270"/>
    <property type="project" value="UniProtKB"/>
</dbReference>
<dbReference type="GO" id="GO:0001947">
    <property type="term" value="P:heart looping"/>
    <property type="evidence" value="ECO:0000266"/>
    <property type="project" value="RGD"/>
</dbReference>
<dbReference type="GO" id="GO:0003007">
    <property type="term" value="P:heart morphogenesis"/>
    <property type="evidence" value="ECO:0000266"/>
    <property type="project" value="RGD"/>
</dbReference>
<dbReference type="GO" id="GO:0001701">
    <property type="term" value="P:in utero embryonic development"/>
    <property type="evidence" value="ECO:0000266"/>
    <property type="project" value="RGD"/>
</dbReference>
<dbReference type="GO" id="GO:0010463">
    <property type="term" value="P:mesenchymal cell proliferation"/>
    <property type="evidence" value="ECO:0000266"/>
    <property type="project" value="RGD"/>
</dbReference>
<dbReference type="GO" id="GO:0060485">
    <property type="term" value="P:mesenchyme development"/>
    <property type="evidence" value="ECO:0000266"/>
    <property type="project" value="RGD"/>
</dbReference>
<dbReference type="GO" id="GO:0010667">
    <property type="term" value="P:negative regulation of cardiac muscle cell apoptotic process"/>
    <property type="evidence" value="ECO:0000266"/>
    <property type="project" value="RGD"/>
</dbReference>
<dbReference type="GO" id="GO:1904036">
    <property type="term" value="P:negative regulation of epithelial cell apoptotic process"/>
    <property type="evidence" value="ECO:0000266"/>
    <property type="project" value="RGD"/>
</dbReference>
<dbReference type="GO" id="GO:0010629">
    <property type="term" value="P:negative regulation of gene expression"/>
    <property type="evidence" value="ECO:0000266"/>
    <property type="project" value="RGD"/>
</dbReference>
<dbReference type="GO" id="GO:0045668">
    <property type="term" value="P:negative regulation of osteoblast differentiation"/>
    <property type="evidence" value="ECO:0000266"/>
    <property type="project" value="RGD"/>
</dbReference>
<dbReference type="GO" id="GO:0014032">
    <property type="term" value="P:neural crest cell development"/>
    <property type="evidence" value="ECO:0000266"/>
    <property type="project" value="RGD"/>
</dbReference>
<dbReference type="GO" id="GO:0042421">
    <property type="term" value="P:norepinephrine biosynthetic process"/>
    <property type="evidence" value="ECO:0000266"/>
    <property type="project" value="RGD"/>
</dbReference>
<dbReference type="GO" id="GO:0042475">
    <property type="term" value="P:odontogenesis of dentin-containing tooth"/>
    <property type="evidence" value="ECO:0000266"/>
    <property type="project" value="RGD"/>
</dbReference>
<dbReference type="GO" id="GO:0001649">
    <property type="term" value="P:osteoblast differentiation"/>
    <property type="evidence" value="ECO:0000266"/>
    <property type="project" value="RGD"/>
</dbReference>
<dbReference type="GO" id="GO:0003151">
    <property type="term" value="P:outflow tract morphogenesis"/>
    <property type="evidence" value="ECO:0000266"/>
    <property type="project" value="RGD"/>
</dbReference>
<dbReference type="GO" id="GO:0048935">
    <property type="term" value="P:peripheral nervous system neuron development"/>
    <property type="evidence" value="ECO:0000266"/>
    <property type="project" value="RGD"/>
</dbReference>
<dbReference type="GO" id="GO:0010613">
    <property type="term" value="P:positive regulation of cardiac muscle hypertrophy"/>
    <property type="evidence" value="ECO:0000266"/>
    <property type="project" value="RGD"/>
</dbReference>
<dbReference type="GO" id="GO:0045893">
    <property type="term" value="P:positive regulation of DNA-templated transcription"/>
    <property type="evidence" value="ECO:0000266"/>
    <property type="project" value="RGD"/>
</dbReference>
<dbReference type="GO" id="GO:0070374">
    <property type="term" value="P:positive regulation of ERK1 and ERK2 cascade"/>
    <property type="evidence" value="ECO:0000266"/>
    <property type="project" value="RGD"/>
</dbReference>
<dbReference type="GO" id="GO:0010628">
    <property type="term" value="P:positive regulation of gene expression"/>
    <property type="evidence" value="ECO:0000266"/>
    <property type="project" value="RGD"/>
</dbReference>
<dbReference type="GO" id="GO:1900745">
    <property type="term" value="P:positive regulation of p38MAPK cascade"/>
    <property type="evidence" value="ECO:0000266"/>
    <property type="project" value="RGD"/>
</dbReference>
<dbReference type="GO" id="GO:2001262">
    <property type="term" value="P:positive regulation of semaphorin-plexin signaling pathway"/>
    <property type="evidence" value="ECO:0000266"/>
    <property type="project" value="RGD"/>
</dbReference>
<dbReference type="GO" id="GO:0045944">
    <property type="term" value="P:positive regulation of transcription by RNA polymerase II"/>
    <property type="evidence" value="ECO:0000266"/>
    <property type="project" value="RGD"/>
</dbReference>
<dbReference type="GO" id="GO:1903929">
    <property type="term" value="P:primary palate development"/>
    <property type="evidence" value="ECO:0000266"/>
    <property type="project" value="RGD"/>
</dbReference>
<dbReference type="GO" id="GO:0006355">
    <property type="term" value="P:regulation of DNA-templated transcription"/>
    <property type="evidence" value="ECO:0000266"/>
    <property type="project" value="RGD"/>
</dbReference>
<dbReference type="GO" id="GO:0003266">
    <property type="term" value="P:regulation of secondary heart field cardioblast proliferation"/>
    <property type="evidence" value="ECO:0000266"/>
    <property type="project" value="RGD"/>
</dbReference>
<dbReference type="GO" id="GO:0034103">
    <property type="term" value="P:regulation of tissue remodeling"/>
    <property type="evidence" value="ECO:0000266"/>
    <property type="project" value="RGD"/>
</dbReference>
<dbReference type="GO" id="GO:0006357">
    <property type="term" value="P:regulation of transcription by RNA polymerase II"/>
    <property type="evidence" value="ECO:0000318"/>
    <property type="project" value="GO_Central"/>
</dbReference>
<dbReference type="GO" id="GO:0060021">
    <property type="term" value="P:roof of mouth development"/>
    <property type="evidence" value="ECO:0000266"/>
    <property type="project" value="RGD"/>
</dbReference>
<dbReference type="GO" id="GO:0001967">
    <property type="term" value="P:suckling behavior"/>
    <property type="evidence" value="ECO:0000266"/>
    <property type="project" value="RGD"/>
</dbReference>
<dbReference type="GO" id="GO:0048485">
    <property type="term" value="P:sympathetic nervous system development"/>
    <property type="evidence" value="ECO:0000266"/>
    <property type="project" value="RGD"/>
</dbReference>
<dbReference type="GO" id="GO:0048538">
    <property type="term" value="P:thymus development"/>
    <property type="evidence" value="ECO:0000266"/>
    <property type="project" value="RGD"/>
</dbReference>
<dbReference type="GO" id="GO:0043586">
    <property type="term" value="P:tongue development"/>
    <property type="evidence" value="ECO:0000266"/>
    <property type="project" value="RGD"/>
</dbReference>
<dbReference type="GO" id="GO:0061032">
    <property type="term" value="P:visceral serous pericardium development"/>
    <property type="evidence" value="ECO:0000266"/>
    <property type="project" value="RGD"/>
</dbReference>
<dbReference type="CDD" id="cd11471">
    <property type="entry name" value="bHLH_TS_HAND2"/>
    <property type="match status" value="1"/>
</dbReference>
<dbReference type="FunFam" id="4.10.280.10:FF:000010">
    <property type="entry name" value="Scleraxis bHLH transcription factor"/>
    <property type="match status" value="1"/>
</dbReference>
<dbReference type="Gene3D" id="4.10.280.10">
    <property type="entry name" value="Helix-loop-helix DNA-binding domain"/>
    <property type="match status" value="1"/>
</dbReference>
<dbReference type="InterPro" id="IPR011598">
    <property type="entry name" value="bHLH_dom"/>
</dbReference>
<dbReference type="InterPro" id="IPR050283">
    <property type="entry name" value="E-box_TF_Regulators"/>
</dbReference>
<dbReference type="InterPro" id="IPR036638">
    <property type="entry name" value="HLH_DNA-bd_sf"/>
</dbReference>
<dbReference type="PANTHER" id="PTHR23349">
    <property type="entry name" value="BASIC HELIX-LOOP-HELIX TRANSCRIPTION FACTOR, TWIST"/>
    <property type="match status" value="1"/>
</dbReference>
<dbReference type="PANTHER" id="PTHR23349:SF41">
    <property type="entry name" value="HEART- AND NEURAL CREST DERIVATIVES-EXPRESSED PROTEIN 2"/>
    <property type="match status" value="1"/>
</dbReference>
<dbReference type="Pfam" id="PF00010">
    <property type="entry name" value="HLH"/>
    <property type="match status" value="1"/>
</dbReference>
<dbReference type="SMART" id="SM00353">
    <property type="entry name" value="HLH"/>
    <property type="match status" value="1"/>
</dbReference>
<dbReference type="SUPFAM" id="SSF47459">
    <property type="entry name" value="HLH, helix-loop-helix DNA-binding domain"/>
    <property type="match status" value="1"/>
</dbReference>
<dbReference type="PROSITE" id="PS50888">
    <property type="entry name" value="BHLH"/>
    <property type="match status" value="1"/>
</dbReference>
<comment type="function">
    <text evidence="1">Essential for cardiac morphogenesis, particularly for the formation of the right ventricle and of the aortic arch arteries. Required for vascular development and regulation of angiogenesis, possibly through a VEGF signaling pathway. Also plays an important role in limb development, particularly in the establishment of anterior-posterior polarization, acting as an upstream regulator of sonic hedgehog (SHH) induction in the limb bud. Is involved in the development of branchial arches, which give rise to unique structures in the head and neck. Binds DNA on E-box consensus sequence 5'-CANNTG-3' (By similarity).</text>
</comment>
<comment type="subunit">
    <text evidence="1">Efficient DNA binding requires dimerization with another bHLH protein. Forms homodimers and heterodimers with TCF3 gene products E12 and E47, HAND1 and HEY1, HEY2 and HEYL (hairy-related transcription factors) (By similarity).</text>
</comment>
<comment type="subcellular location">
    <subcellularLocation>
        <location evidence="2">Nucleus</location>
    </subcellularLocation>
</comment>
<feature type="chain" id="PRO_0000127193" description="Heart- and neural crest derivatives-expressed protein 2">
    <location>
        <begin position="1"/>
        <end position="217"/>
    </location>
</feature>
<feature type="domain" description="bHLH" evidence="2">
    <location>
        <begin position="99"/>
        <end position="151"/>
    </location>
</feature>
<feature type="region of interest" description="Disordered" evidence="3">
    <location>
        <begin position="76"/>
        <end position="116"/>
    </location>
</feature>
<feature type="compositionally biased region" description="Gly residues" evidence="3">
    <location>
        <begin position="83"/>
        <end position="94"/>
    </location>
</feature>
<feature type="compositionally biased region" description="Basic residues" evidence="3">
    <location>
        <begin position="97"/>
        <end position="112"/>
    </location>
</feature>
<sequence length="217" mass="23666">MSLVGGFPHHPVVHHEGYPFAAAAAAAAAAAASRCSHEENPYFHGWLIGHPEMSPPDYSMALSYSPEYASGAAGLDHSHYGGVPPGAGPPGLGGPRPVKRRGTANRKERRRTQSINSAFAELRECIPNVPADTKLSKIKTLRLATSYIAYLMDLLAKDDQNGEAEAFKAEIKKTDVKEEKRKKELNEILKSTVSSNDKKTKGRTGWPQHVWALELKQ</sequence>
<proteinExistence type="evidence at transcript level"/>
<protein>
    <recommendedName>
        <fullName>Heart- and neural crest derivatives-expressed protein 2</fullName>
    </recommendedName>
    <alternativeName>
        <fullName>Deciduum, heart, autonomic nervous system and neural crest derivatives-expressed protein 2</fullName>
        <shortName>dHAND</shortName>
    </alternativeName>
</protein>
<accession>P61295</accession>
<accession>O95300</accession>
<accession>O95301</accession>
<accession>P97833</accession>
<evidence type="ECO:0000250" key="1"/>
<evidence type="ECO:0000255" key="2">
    <source>
        <dbReference type="PROSITE-ProRule" id="PRU00981"/>
    </source>
</evidence>
<evidence type="ECO:0000256" key="3">
    <source>
        <dbReference type="SAM" id="MobiDB-lite"/>
    </source>
</evidence>
<organism>
    <name type="scientific">Rattus norvegicus</name>
    <name type="common">Rat</name>
    <dbReference type="NCBI Taxonomy" id="10116"/>
    <lineage>
        <taxon>Eukaryota</taxon>
        <taxon>Metazoa</taxon>
        <taxon>Chordata</taxon>
        <taxon>Craniata</taxon>
        <taxon>Vertebrata</taxon>
        <taxon>Euteleostomi</taxon>
        <taxon>Mammalia</taxon>
        <taxon>Eutheria</taxon>
        <taxon>Euarchontoglires</taxon>
        <taxon>Glires</taxon>
        <taxon>Rodentia</taxon>
        <taxon>Myomorpha</taxon>
        <taxon>Muroidea</taxon>
        <taxon>Muridae</taxon>
        <taxon>Murinae</taxon>
        <taxon>Rattus</taxon>
    </lineage>
</organism>
<keyword id="KW-0037">Angiogenesis</keyword>
<keyword id="KW-0217">Developmental protein</keyword>
<keyword id="KW-0221">Differentiation</keyword>
<keyword id="KW-0238">DNA-binding</keyword>
<keyword id="KW-0539">Nucleus</keyword>
<keyword id="KW-1185">Reference proteome</keyword>
<keyword id="KW-0804">Transcription</keyword>
<keyword id="KW-0805">Transcription regulation</keyword>